<comment type="function">
    <text evidence="1 12 13">Cell surface transmembrane ligand for Eph receptors, a family of receptor tyrosine kinases which are crucial for migration, repulsion and adhesion during neuronal, vascular and epithelial development (PubMed:7973638, PubMed:8070404). Binding to Eph receptors residing on adjacent cells leads to contact-dependent bidirectional signaling into neighboring cells (PubMed:7973638, PubMed:8070404). Shows high affinity for the receptor tyrosine kinase EPHB1/ELK (PubMed:7973638, PubMed:8070404). Can also bind EPHB2 and EPHB3 (PubMed:8070404). Binds to, and induces collapse of, commissural axons/growth cones in vitro (By similarity). May play a role in constraining the orientation of longitudinally projecting axons (By similarity).</text>
</comment>
<comment type="subunit">
    <text evidence="1 5 11">Interacts (via PDZ-binding motif) with GRIP1 and GRIP2 (via PDZ domain 6) (PubMed:10197531). Interacts with TLE1 (PubMed:21429299). The intracellular domain peptide interacts with ZHX2; the interaction enhances ZHX2 transcriptional repression activity (By similarity).</text>
</comment>
<comment type="interaction">
    <interactant intactId="EBI-538287">
        <id>P98172</id>
    </interactant>
    <interactant intactId="EBI-12109402">
        <id>Q86W74-2</id>
        <label>ANKRD46</label>
    </interactant>
    <organismsDiffer>false</organismsDiffer>
    <experiments>3</experiments>
</comment>
<comment type="interaction">
    <interactant intactId="EBI-538287">
        <id>P98172</id>
    </interactant>
    <interactant intactId="EBI-641062">
        <id>P04626</id>
        <label>ERBB2</label>
    </interactant>
    <organismsDiffer>false</organismsDiffer>
    <experiments>12</experiments>
</comment>
<comment type="subcellular location">
    <subcellularLocation>
        <location evidence="5 12">Cell membrane</location>
        <topology evidence="2">Single-pass type I membrane protein</topology>
    </subcellularLocation>
    <subcellularLocation>
        <location evidence="5">Membrane raft</location>
    </subcellularLocation>
    <text evidence="5">May recruit GRIP1 and GRIP2 to membrane raft domains.</text>
</comment>
<comment type="subcellular location">
    <molecule>Ephrin-B1 C-terminal fragment</molecule>
    <subcellularLocation>
        <location evidence="10">Cell membrane</location>
        <topology evidence="15">Single-pass type I membrane protein</topology>
    </subcellularLocation>
</comment>
<comment type="subcellular location">
    <molecule>Ephrin-B1 intracellular domain</molecule>
    <subcellularLocation>
        <location evidence="10">Nucleus</location>
    </subcellularLocation>
    <text evidence="1">Colocalizes with ZHX2 in the nucleus.</text>
</comment>
<comment type="tissue specificity">
    <text evidence="12 13">Widely expressed (PubMed:7973638, PubMed:8070404). Detected in both neuronal and non-neuronal tissues (PubMed:7973638, PubMed:8070404). Seems to have particularly strong expression in retina, sciatic nerve, heart and spinal cord (PubMed:7973638).</text>
</comment>
<comment type="induction">
    <text evidence="13">Up-regulated in response to TNF.</text>
</comment>
<comment type="PTM">
    <text evidence="12">Inducible phosphorylation of tyrosine residues in the cytoplasmic domain.</text>
</comment>
<comment type="PTM">
    <text evidence="10">Proteolytically processed. The ectodomain is cleaved, probably by a metalloprotease, to produce a membrane-tethered C-terminal fragment. This fragment is then further processed by the gamma-secretase complex to yield a soluble intracellular domain peptide which can translocate to the nucleus. The intracellular domain peptide is highly labile suggesting that it is targeted for degradation by the proteasome.</text>
</comment>
<comment type="disease" evidence="6 7 9">
    <disease id="DI-01443">
        <name>Craniofrontonasal syndrome</name>
        <acronym>CFNS</acronym>
        <description>X-linked inherited syndrome characterized by hypertelorism, coronal synostosis with brachycephaly, downslanting palpebral fissures, clefting of the nasal tip, joint anomalies, longitudinally grooved fingernails and other digital anomalies.</description>
        <dbReference type="MIM" id="304110"/>
    </disease>
    <text>The disease is caused by variants affecting the gene represented in this entry.</text>
</comment>
<comment type="similarity">
    <text evidence="3">Belongs to the ephrin family.</text>
</comment>
<feature type="signal peptide" evidence="8">
    <location>
        <begin position="1"/>
        <end position="27"/>
    </location>
</feature>
<feature type="chain" id="PRO_0000008387" description="Ephrin-B1">
    <location>
        <begin position="28"/>
        <end position="346"/>
    </location>
</feature>
<feature type="chain" id="PRO_0000445791" description="Ephrin-B1 C-terminal fragment" evidence="15">
    <location>
        <begin position="218"/>
        <end position="346"/>
    </location>
</feature>
<feature type="chain" id="PRO_0000445792" description="Ephrin-B1 intracellular domain" evidence="15">
    <location>
        <begin position="260"/>
        <end position="346"/>
    </location>
</feature>
<feature type="topological domain" description="Extracellular" evidence="2">
    <location>
        <begin position="28"/>
        <end position="237"/>
    </location>
</feature>
<feature type="transmembrane region" description="Helical" evidence="2">
    <location>
        <begin position="238"/>
        <end position="258"/>
    </location>
</feature>
<feature type="topological domain" description="Cytoplasmic" evidence="2">
    <location>
        <begin position="259"/>
        <end position="346"/>
    </location>
</feature>
<feature type="domain" description="Ephrin RBD" evidence="3">
    <location>
        <begin position="30"/>
        <end position="164"/>
    </location>
</feature>
<feature type="region of interest" description="Disordered" evidence="4">
    <location>
        <begin position="169"/>
        <end position="228"/>
    </location>
</feature>
<feature type="region of interest" description="Interaction with ZHX2" evidence="1">
    <location>
        <begin position="263"/>
        <end position="294"/>
    </location>
</feature>
<feature type="short sequence motif" description="Nuclear localization signal" evidence="10">
    <location>
        <begin position="260"/>
        <end position="273"/>
    </location>
</feature>
<feature type="short sequence motif" description="PDZ-binding" evidence="2">
    <location>
        <begin position="344"/>
        <end position="346"/>
    </location>
</feature>
<feature type="compositionally biased region" description="Basic and acidic residues" evidence="4">
    <location>
        <begin position="205"/>
        <end position="218"/>
    </location>
</feature>
<feature type="modified residue" description="Phosphoserine" evidence="18">
    <location>
        <position position="281"/>
    </location>
</feature>
<feature type="modified residue" description="Phosphoserine" evidence="16 17 18">
    <location>
        <position position="287"/>
    </location>
</feature>
<feature type="glycosylation site" description="N-linked (GlcNAc...) asparagine" evidence="2">
    <location>
        <position position="139"/>
    </location>
</feature>
<feature type="disulfide bond" evidence="3">
    <location>
        <begin position="64"/>
        <end position="101"/>
    </location>
</feature>
<feature type="disulfide bond" evidence="3">
    <location>
        <begin position="89"/>
        <end position="153"/>
    </location>
</feature>
<feature type="sequence variant" id="VAR_023127" description="In CFNS." evidence="9">
    <original>P</original>
    <variation>R</variation>
    <location>
        <position position="27"/>
    </location>
</feature>
<feature type="sequence variant" id="VAR_023128" description="In CFNS; dbSNP:rs104894801." evidence="6 9">
    <original>P</original>
    <variation>L</variation>
    <location>
        <position position="54"/>
    </location>
</feature>
<feature type="sequence variant" id="VAR_023129" description="In CFNS." evidence="7">
    <original>I</original>
    <variation>T</variation>
    <location>
        <position position="62"/>
    </location>
</feature>
<feature type="sequence variant" id="VAR_023130" description="In CFNS." evidence="7">
    <original>L</original>
    <variation>S</variation>
    <location>
        <position position="98"/>
    </location>
</feature>
<feature type="sequence variant" id="VAR_023131" description="In CFNS; dbSNP:rs104894796." evidence="6">
    <original>T</original>
    <variation>I</variation>
    <location>
        <position position="111"/>
    </location>
</feature>
<feature type="sequence variant" id="VAR_023132" description="In CFNS." evidence="7">
    <original>Q</original>
    <variation>P</variation>
    <location>
        <position position="115"/>
    </location>
</feature>
<feature type="sequence variant" id="VAR_023133" description="In CFNS." evidence="7 9">
    <original>P</original>
    <variation>H</variation>
    <location>
        <position position="119"/>
    </location>
</feature>
<feature type="sequence variant" id="VAR_023134" description="In CFNS." evidence="9">
    <original>P</original>
    <variation>S</variation>
    <location>
        <position position="119"/>
    </location>
</feature>
<feature type="sequence variant" id="VAR_023135" description="In CFNS." evidence="7">
    <original>P</original>
    <variation>T</variation>
    <location>
        <position position="119"/>
    </location>
</feature>
<feature type="sequence variant" id="VAR_023136" description="In CFNS; dbSNP:rs2080471329." evidence="9">
    <original>T</original>
    <variation>A</variation>
    <location>
        <position position="137"/>
    </location>
</feature>
<feature type="sequence variant" id="VAR_023137" description="In CFNS." evidence="9">
    <original>S</original>
    <variation>F</variation>
    <location>
        <position position="138"/>
    </location>
</feature>
<feature type="sequence variant" id="VAR_023138" description="In CFNS; dbSNP:rs28936069." evidence="7 9">
    <original>G</original>
    <variation>S</variation>
    <location>
        <position position="151"/>
    </location>
</feature>
<feature type="sequence variant" id="VAR_023139" description="In CFNS; dbSNP:rs28936070." evidence="7">
    <original>G</original>
    <variation>V</variation>
    <location>
        <position position="151"/>
    </location>
</feature>
<feature type="sequence variant" id="VAR_023140" description="In CFNS." evidence="9">
    <original>C</original>
    <variation>S</variation>
    <location>
        <position position="153"/>
    </location>
</feature>
<feature type="sequence variant" id="VAR_023141" description="In CFNS." evidence="9">
    <original>C</original>
    <variation>Y</variation>
    <location>
        <position position="153"/>
    </location>
</feature>
<feature type="sequence variant" id="VAR_023142" description="In dbSNP:rs146636295." evidence="7">
    <original>R</original>
    <variation>H</variation>
    <location>
        <position position="154"/>
    </location>
</feature>
<feature type="sequence variant" id="VAR_023143" description="In CFNS." evidence="7">
    <original>T</original>
    <variation>P</variation>
    <location>
        <position position="155"/>
    </location>
</feature>
<feature type="sequence variant" id="VAR_023144" description="In CFNS; dbSNP:rs28935170." evidence="7">
    <original>M</original>
    <variation>I</variation>
    <location>
        <position position="158"/>
    </location>
</feature>
<feature type="sequence variant" id="VAR_023145" description="In CFNS; dbSNP:rs28936071." evidence="7">
    <original>M</original>
    <variation>V</variation>
    <location>
        <position position="158"/>
    </location>
</feature>
<feature type="sequence variant" id="VAR_059256" description="In dbSNP:rs7889678.">
    <original>T</original>
    <variation>M</variation>
    <location>
        <position position="172"/>
    </location>
</feature>
<feature type="sequence variant" id="VAR_023146" description="In CFNS." evidence="9">
    <original>S</original>
    <variation>R</variation>
    <location>
        <position position="182"/>
    </location>
</feature>
<feature type="sequence variant" id="VAR_023147" description="In dbSNP:rs16989105.">
    <original>V</original>
    <variation>A</variation>
    <location>
        <position position="189"/>
    </location>
</feature>
<feature type="mutagenesis site" description="The intracellular domain peptide fails to localize to the nucleus." evidence="10">
    <location>
        <begin position="260"/>
        <end position="273"/>
    </location>
</feature>
<feature type="mutagenesis site" description="No effect on gamma-secretase mediated proteolysis of the C-terminal fragment." evidence="10">
    <location>
        <begin position="344"/>
        <end position="346"/>
    </location>
</feature>
<gene>
    <name type="primary">EFNB1</name>
    <name type="synonym">EFL3</name>
    <name type="synonym">EPLG2</name>
    <name type="synonym">LERK2</name>
</gene>
<organism>
    <name type="scientific">Homo sapiens</name>
    <name type="common">Human</name>
    <dbReference type="NCBI Taxonomy" id="9606"/>
    <lineage>
        <taxon>Eukaryota</taxon>
        <taxon>Metazoa</taxon>
        <taxon>Chordata</taxon>
        <taxon>Craniata</taxon>
        <taxon>Vertebrata</taxon>
        <taxon>Euteleostomi</taxon>
        <taxon>Mammalia</taxon>
        <taxon>Eutheria</taxon>
        <taxon>Euarchontoglires</taxon>
        <taxon>Primates</taxon>
        <taxon>Haplorrhini</taxon>
        <taxon>Catarrhini</taxon>
        <taxon>Hominidae</taxon>
        <taxon>Homo</taxon>
    </lineage>
</organism>
<name>EFNB1_HUMAN</name>
<accession>P98172</accession>
<accession>D3DVU0</accession>
<keyword id="KW-0002">3D-structure</keyword>
<keyword id="KW-1003">Cell membrane</keyword>
<keyword id="KW-0989">Craniosynostosis</keyword>
<keyword id="KW-0217">Developmental protein</keyword>
<keyword id="KW-0221">Differentiation</keyword>
<keyword id="KW-0903">Direct protein sequencing</keyword>
<keyword id="KW-0225">Disease variant</keyword>
<keyword id="KW-1015">Disulfide bond</keyword>
<keyword id="KW-0325">Glycoprotein</keyword>
<keyword id="KW-0472">Membrane</keyword>
<keyword id="KW-0524">Neurogenesis</keyword>
<keyword id="KW-0539">Nucleus</keyword>
<keyword id="KW-0597">Phosphoprotein</keyword>
<keyword id="KW-1267">Proteomics identification</keyword>
<keyword id="KW-1185">Reference proteome</keyword>
<keyword id="KW-0732">Signal</keyword>
<keyword id="KW-0812">Transmembrane</keyword>
<keyword id="KW-1133">Transmembrane helix</keyword>
<protein>
    <recommendedName>
        <fullName>Ephrin-B1</fullName>
    </recommendedName>
    <alternativeName>
        <fullName>EFL-3</fullName>
    </alternativeName>
    <alternativeName>
        <fullName>ELK ligand</fullName>
        <shortName>ELK-L</shortName>
    </alternativeName>
    <alternativeName>
        <fullName>EPH-related receptor tyrosine kinase ligand 2</fullName>
        <shortName>LERK-2</shortName>
    </alternativeName>
    <component>
        <recommendedName>
            <fullName evidence="14">Ephrin-B1 C-terminal fragment</fullName>
            <shortName evidence="14">Ephrin-B1 CTF</shortName>
        </recommendedName>
    </component>
    <component>
        <recommendedName>
            <fullName evidence="14">Ephrin-B1 intracellular domain</fullName>
            <shortName evidence="14">Ephrin-B1 ICD</shortName>
        </recommendedName>
    </component>
</protein>
<reference key="1">
    <citation type="journal article" date="1994" name="EMBO J.">
        <title>Molecular characterization of a family of ligands for eph-related tyrosine kinase receptors.</title>
        <authorList>
            <person name="Beckmann M.P."/>
            <person name="Cerretti D.P."/>
            <person name="Baum P."/>
            <person name="Vanden Bos T."/>
            <person name="James L."/>
            <person name="Farrah T."/>
            <person name="Kozlosky C."/>
            <person name="Hollingsworth T."/>
            <person name="Shilling H."/>
            <person name="Maraskovsky E."/>
            <person name="Fletcher F.A."/>
            <person name="Lhotak V."/>
            <person name="Pawson T."/>
            <person name="Lyman S.D."/>
        </authorList>
    </citation>
    <scope>NUCLEOTIDE SEQUENCE [MRNA]</scope>
    <scope>FUNCTION</scope>
    <scope>TISSUE SPECIFICITY</scope>
    <scope>INDUCTION</scope>
    <source>
        <tissue>Placenta</tissue>
    </source>
</reference>
<reference key="2">
    <citation type="journal article" date="1994" name="Science">
        <title>Ligands for EPH-related receptor tyrosine kinases that require membrane attachment or clustering for activity.</title>
        <authorList>
            <person name="Davis S."/>
            <person name="Gale N.W."/>
            <person name="Aldrich T.H."/>
            <person name="Maisonpierre P.C."/>
            <person name="Lhotak V."/>
            <person name="Pawson T."/>
            <person name="Goldfarb M."/>
            <person name="Yancopoulos G.D."/>
        </authorList>
    </citation>
    <scope>NUCLEOTIDE SEQUENCE [MRNA]</scope>
    <scope>FUNCTION</scope>
    <scope>SUBCELLULAR LOCATION</scope>
    <scope>TISSUE SPECIFICITY</scope>
    <scope>PHOSPHORYLATION</scope>
</reference>
<reference key="3">
    <citation type="submission" date="1997-01" db="EMBL/GenBank/DDBJ databases">
        <title>Assignment of the human Elk ligand gene, EPLG2, to chromosome region Xq12.</title>
        <authorList>
            <person name="Fletcher F.A."/>
            <person name="Huebner K."/>
            <person name="Shaffer L.G."/>
            <person name="Monaco A."/>
            <person name="Mueller U."/>
            <person name="Kozlosky C."/>
            <person name="Druck T."/>
            <person name="Simoneaux D.K."/>
            <person name="Fairweather N."/>
            <person name="Chelly J."/>
            <person name="Cerretti D.P."/>
            <person name="Belmont J.W."/>
            <person name="Beckmann M.P."/>
            <person name="Lyman S.D."/>
        </authorList>
    </citation>
    <scope>NUCLEOTIDE SEQUENCE [MRNA]</scope>
</reference>
<reference key="4">
    <citation type="journal article" date="2005" name="Nature">
        <title>The DNA sequence of the human X chromosome.</title>
        <authorList>
            <person name="Ross M.T."/>
            <person name="Grafham D.V."/>
            <person name="Coffey A.J."/>
            <person name="Scherer S."/>
            <person name="McLay K."/>
            <person name="Muzny D."/>
            <person name="Platzer M."/>
            <person name="Howell G.R."/>
            <person name="Burrows C."/>
            <person name="Bird C.P."/>
            <person name="Frankish A."/>
            <person name="Lovell F.L."/>
            <person name="Howe K.L."/>
            <person name="Ashurst J.L."/>
            <person name="Fulton R.S."/>
            <person name="Sudbrak R."/>
            <person name="Wen G."/>
            <person name="Jones M.C."/>
            <person name="Hurles M.E."/>
            <person name="Andrews T.D."/>
            <person name="Scott C.E."/>
            <person name="Searle S."/>
            <person name="Ramser J."/>
            <person name="Whittaker A."/>
            <person name="Deadman R."/>
            <person name="Carter N.P."/>
            <person name="Hunt S.E."/>
            <person name="Chen R."/>
            <person name="Cree A."/>
            <person name="Gunaratne P."/>
            <person name="Havlak P."/>
            <person name="Hodgson A."/>
            <person name="Metzker M.L."/>
            <person name="Richards S."/>
            <person name="Scott G."/>
            <person name="Steffen D."/>
            <person name="Sodergren E."/>
            <person name="Wheeler D.A."/>
            <person name="Worley K.C."/>
            <person name="Ainscough R."/>
            <person name="Ambrose K.D."/>
            <person name="Ansari-Lari M.A."/>
            <person name="Aradhya S."/>
            <person name="Ashwell R.I."/>
            <person name="Babbage A.K."/>
            <person name="Bagguley C.L."/>
            <person name="Ballabio A."/>
            <person name="Banerjee R."/>
            <person name="Barker G.E."/>
            <person name="Barlow K.F."/>
            <person name="Barrett I.P."/>
            <person name="Bates K.N."/>
            <person name="Beare D.M."/>
            <person name="Beasley H."/>
            <person name="Beasley O."/>
            <person name="Beck A."/>
            <person name="Bethel G."/>
            <person name="Blechschmidt K."/>
            <person name="Brady N."/>
            <person name="Bray-Allen S."/>
            <person name="Bridgeman A.M."/>
            <person name="Brown A.J."/>
            <person name="Brown M.J."/>
            <person name="Bonnin D."/>
            <person name="Bruford E.A."/>
            <person name="Buhay C."/>
            <person name="Burch P."/>
            <person name="Burford D."/>
            <person name="Burgess J."/>
            <person name="Burrill W."/>
            <person name="Burton J."/>
            <person name="Bye J.M."/>
            <person name="Carder C."/>
            <person name="Carrel L."/>
            <person name="Chako J."/>
            <person name="Chapman J.C."/>
            <person name="Chavez D."/>
            <person name="Chen E."/>
            <person name="Chen G."/>
            <person name="Chen Y."/>
            <person name="Chen Z."/>
            <person name="Chinault C."/>
            <person name="Ciccodicola A."/>
            <person name="Clark S.Y."/>
            <person name="Clarke G."/>
            <person name="Clee C.M."/>
            <person name="Clegg S."/>
            <person name="Clerc-Blankenburg K."/>
            <person name="Clifford K."/>
            <person name="Cobley V."/>
            <person name="Cole C.G."/>
            <person name="Conquer J.S."/>
            <person name="Corby N."/>
            <person name="Connor R.E."/>
            <person name="David R."/>
            <person name="Davies J."/>
            <person name="Davis C."/>
            <person name="Davis J."/>
            <person name="Delgado O."/>
            <person name="Deshazo D."/>
            <person name="Dhami P."/>
            <person name="Ding Y."/>
            <person name="Dinh H."/>
            <person name="Dodsworth S."/>
            <person name="Draper H."/>
            <person name="Dugan-Rocha S."/>
            <person name="Dunham A."/>
            <person name="Dunn M."/>
            <person name="Durbin K.J."/>
            <person name="Dutta I."/>
            <person name="Eades T."/>
            <person name="Ellwood M."/>
            <person name="Emery-Cohen A."/>
            <person name="Errington H."/>
            <person name="Evans K.L."/>
            <person name="Faulkner L."/>
            <person name="Francis F."/>
            <person name="Frankland J."/>
            <person name="Fraser A.E."/>
            <person name="Galgoczy P."/>
            <person name="Gilbert J."/>
            <person name="Gill R."/>
            <person name="Gloeckner G."/>
            <person name="Gregory S.G."/>
            <person name="Gribble S."/>
            <person name="Griffiths C."/>
            <person name="Grocock R."/>
            <person name="Gu Y."/>
            <person name="Gwilliam R."/>
            <person name="Hamilton C."/>
            <person name="Hart E.A."/>
            <person name="Hawes A."/>
            <person name="Heath P.D."/>
            <person name="Heitmann K."/>
            <person name="Hennig S."/>
            <person name="Hernandez J."/>
            <person name="Hinzmann B."/>
            <person name="Ho S."/>
            <person name="Hoffs M."/>
            <person name="Howden P.J."/>
            <person name="Huckle E.J."/>
            <person name="Hume J."/>
            <person name="Hunt P.J."/>
            <person name="Hunt A.R."/>
            <person name="Isherwood J."/>
            <person name="Jacob L."/>
            <person name="Johnson D."/>
            <person name="Jones S."/>
            <person name="de Jong P.J."/>
            <person name="Joseph S.S."/>
            <person name="Keenan S."/>
            <person name="Kelly S."/>
            <person name="Kershaw J.K."/>
            <person name="Khan Z."/>
            <person name="Kioschis P."/>
            <person name="Klages S."/>
            <person name="Knights A.J."/>
            <person name="Kosiura A."/>
            <person name="Kovar-Smith C."/>
            <person name="Laird G.K."/>
            <person name="Langford C."/>
            <person name="Lawlor S."/>
            <person name="Leversha M."/>
            <person name="Lewis L."/>
            <person name="Liu W."/>
            <person name="Lloyd C."/>
            <person name="Lloyd D.M."/>
            <person name="Loulseged H."/>
            <person name="Loveland J.E."/>
            <person name="Lovell J.D."/>
            <person name="Lozado R."/>
            <person name="Lu J."/>
            <person name="Lyne R."/>
            <person name="Ma J."/>
            <person name="Maheshwari M."/>
            <person name="Matthews L.H."/>
            <person name="McDowall J."/>
            <person name="McLaren S."/>
            <person name="McMurray A."/>
            <person name="Meidl P."/>
            <person name="Meitinger T."/>
            <person name="Milne S."/>
            <person name="Miner G."/>
            <person name="Mistry S.L."/>
            <person name="Morgan M."/>
            <person name="Morris S."/>
            <person name="Mueller I."/>
            <person name="Mullikin J.C."/>
            <person name="Nguyen N."/>
            <person name="Nordsiek G."/>
            <person name="Nyakatura G."/>
            <person name="O'dell C.N."/>
            <person name="Okwuonu G."/>
            <person name="Palmer S."/>
            <person name="Pandian R."/>
            <person name="Parker D."/>
            <person name="Parrish J."/>
            <person name="Pasternak S."/>
            <person name="Patel D."/>
            <person name="Pearce A.V."/>
            <person name="Pearson D.M."/>
            <person name="Pelan S.E."/>
            <person name="Perez L."/>
            <person name="Porter K.M."/>
            <person name="Ramsey Y."/>
            <person name="Reichwald K."/>
            <person name="Rhodes S."/>
            <person name="Ridler K.A."/>
            <person name="Schlessinger D."/>
            <person name="Schueler M.G."/>
            <person name="Sehra H.K."/>
            <person name="Shaw-Smith C."/>
            <person name="Shen H."/>
            <person name="Sheridan E.M."/>
            <person name="Shownkeen R."/>
            <person name="Skuce C.D."/>
            <person name="Smith M.L."/>
            <person name="Sotheran E.C."/>
            <person name="Steingruber H.E."/>
            <person name="Steward C.A."/>
            <person name="Storey R."/>
            <person name="Swann R.M."/>
            <person name="Swarbreck D."/>
            <person name="Tabor P.E."/>
            <person name="Taudien S."/>
            <person name="Taylor T."/>
            <person name="Teague B."/>
            <person name="Thomas K."/>
            <person name="Thorpe A."/>
            <person name="Timms K."/>
            <person name="Tracey A."/>
            <person name="Trevanion S."/>
            <person name="Tromans A.C."/>
            <person name="d'Urso M."/>
            <person name="Verduzco D."/>
            <person name="Villasana D."/>
            <person name="Waldron L."/>
            <person name="Wall M."/>
            <person name="Wang Q."/>
            <person name="Warren J."/>
            <person name="Warry G.L."/>
            <person name="Wei X."/>
            <person name="West A."/>
            <person name="Whitehead S.L."/>
            <person name="Whiteley M.N."/>
            <person name="Wilkinson J.E."/>
            <person name="Willey D.L."/>
            <person name="Williams G."/>
            <person name="Williams L."/>
            <person name="Williamson A."/>
            <person name="Williamson H."/>
            <person name="Wilming L."/>
            <person name="Woodmansey R.L."/>
            <person name="Wray P.W."/>
            <person name="Yen J."/>
            <person name="Zhang J."/>
            <person name="Zhou J."/>
            <person name="Zoghbi H."/>
            <person name="Zorilla S."/>
            <person name="Buck D."/>
            <person name="Reinhardt R."/>
            <person name="Poustka A."/>
            <person name="Rosenthal A."/>
            <person name="Lehrach H."/>
            <person name="Meindl A."/>
            <person name="Minx P.J."/>
            <person name="Hillier L.W."/>
            <person name="Willard H.F."/>
            <person name="Wilson R.K."/>
            <person name="Waterston R.H."/>
            <person name="Rice C.M."/>
            <person name="Vaudin M."/>
            <person name="Coulson A."/>
            <person name="Nelson D.L."/>
            <person name="Weinstock G."/>
            <person name="Sulston J.E."/>
            <person name="Durbin R.M."/>
            <person name="Hubbard T."/>
            <person name="Gibbs R.A."/>
            <person name="Beck S."/>
            <person name="Rogers J."/>
            <person name="Bentley D.R."/>
        </authorList>
    </citation>
    <scope>NUCLEOTIDE SEQUENCE [LARGE SCALE GENOMIC DNA]</scope>
</reference>
<reference key="5">
    <citation type="submission" date="2005-09" db="EMBL/GenBank/DDBJ databases">
        <authorList>
            <person name="Mural R.J."/>
            <person name="Istrail S."/>
            <person name="Sutton G.G."/>
            <person name="Florea L."/>
            <person name="Halpern A.L."/>
            <person name="Mobarry C.M."/>
            <person name="Lippert R."/>
            <person name="Walenz B."/>
            <person name="Shatkay H."/>
            <person name="Dew I."/>
            <person name="Miller J.R."/>
            <person name="Flanigan M.J."/>
            <person name="Edwards N.J."/>
            <person name="Bolanos R."/>
            <person name="Fasulo D."/>
            <person name="Halldorsson B.V."/>
            <person name="Hannenhalli S."/>
            <person name="Turner R."/>
            <person name="Yooseph S."/>
            <person name="Lu F."/>
            <person name="Nusskern D.R."/>
            <person name="Shue B.C."/>
            <person name="Zheng X.H."/>
            <person name="Zhong F."/>
            <person name="Delcher A.L."/>
            <person name="Huson D.H."/>
            <person name="Kravitz S.A."/>
            <person name="Mouchard L."/>
            <person name="Reinert K."/>
            <person name="Remington K.A."/>
            <person name="Clark A.G."/>
            <person name="Waterman M.S."/>
            <person name="Eichler E.E."/>
            <person name="Adams M.D."/>
            <person name="Hunkapiller M.W."/>
            <person name="Myers E.W."/>
            <person name="Venter J.C."/>
        </authorList>
    </citation>
    <scope>NUCLEOTIDE SEQUENCE [LARGE SCALE GENOMIC DNA]</scope>
</reference>
<reference key="6">
    <citation type="journal article" date="2004" name="Genome Res.">
        <title>The status, quality, and expansion of the NIH full-length cDNA project: the Mammalian Gene Collection (MGC).</title>
        <authorList>
            <consortium name="The MGC Project Team"/>
        </authorList>
    </citation>
    <scope>NUCLEOTIDE SEQUENCE [LARGE SCALE MRNA]</scope>
    <source>
        <tissue>Eye</tissue>
        <tissue>Skin</tissue>
    </source>
</reference>
<reference key="7">
    <citation type="journal article" date="2004" name="Protein Sci.">
        <title>Signal peptide prediction based on analysis of experimentally verified cleavage sites.</title>
        <authorList>
            <person name="Zhang Z."/>
            <person name="Henzel W.J."/>
        </authorList>
    </citation>
    <scope>PROTEIN SEQUENCE OF 28-42</scope>
</reference>
<reference key="8">
    <citation type="journal article" date="1999" name="Neuron">
        <title>EphrinB ligands recruit GRIP family PDZ adaptor proteins into raft membrane microdomains.</title>
        <authorList>
            <person name="Brueckner K."/>
            <person name="Pablo Labrador J."/>
            <person name="Scheiffele P."/>
            <person name="Herb A."/>
            <person name="Seeburg P.H."/>
            <person name="Klein R."/>
        </authorList>
    </citation>
    <scope>SUBCELLULAR LOCATION</scope>
    <scope>INTERACTION WITH GRIP1 AND GRIP2</scope>
    <source>
        <tissue>Fetal brain</tissue>
    </source>
</reference>
<reference key="9">
    <citation type="journal article" date="2006" name="Mol. Neurodegener.">
        <title>Presenilin-dependent intramembrane cleavage of ephrin-B1.</title>
        <authorList>
            <person name="Tomita T."/>
            <person name="Tanaka S."/>
            <person name="Morohashi Y."/>
            <person name="Iwatsubo T."/>
        </authorList>
    </citation>
    <scope>FUNCTION</scope>
    <scope>SUBCELLULAR LOCATION</scope>
    <scope>PROTEOLYTIC CLEAVAGE</scope>
    <scope>NUCLEAR LOCALIZATION SIGNAL</scope>
    <scope>MUTAGENESIS OF 260-VAL--THR-273 AND 344-TYR--VAL-346</scope>
</reference>
<reference key="10">
    <citation type="journal article" date="2008" name="Proc. Natl. Acad. Sci. U.S.A.">
        <title>A quantitative atlas of mitotic phosphorylation.</title>
        <authorList>
            <person name="Dephoure N."/>
            <person name="Zhou C."/>
            <person name="Villen J."/>
            <person name="Beausoleil S.A."/>
            <person name="Bakalarski C.E."/>
            <person name="Elledge S.J."/>
            <person name="Gygi S.P."/>
        </authorList>
    </citation>
    <scope>PHOSPHORYLATION [LARGE SCALE ANALYSIS] AT SER-287</scope>
    <scope>IDENTIFICATION BY MASS SPECTROMETRY [LARGE SCALE ANALYSIS]</scope>
    <source>
        <tissue>Cervix carcinoma</tissue>
    </source>
</reference>
<reference key="11">
    <citation type="journal article" date="2010" name="Sci. Signal.">
        <title>Quantitative phosphoproteomics reveals widespread full phosphorylation site occupancy during mitosis.</title>
        <authorList>
            <person name="Olsen J.V."/>
            <person name="Vermeulen M."/>
            <person name="Santamaria A."/>
            <person name="Kumar C."/>
            <person name="Miller M.L."/>
            <person name="Jensen L.J."/>
            <person name="Gnad F."/>
            <person name="Cox J."/>
            <person name="Jensen T.S."/>
            <person name="Nigg E.A."/>
            <person name="Brunak S."/>
            <person name="Mann M."/>
        </authorList>
    </citation>
    <scope>PHOSPHORYLATION [LARGE SCALE ANALYSIS] AT SER-287</scope>
    <scope>IDENTIFICATION BY MASS SPECTROMETRY [LARGE SCALE ANALYSIS]</scope>
    <source>
        <tissue>Cervix carcinoma</tissue>
    </source>
</reference>
<reference key="12">
    <citation type="journal article" date="2011" name="BMB Rep.">
        <title>EphrinB1 interacts with the transcriptional co-repressor Groucho/xTLE4.</title>
        <authorList>
            <person name="Kamata T."/>
            <person name="Bong Y.S."/>
            <person name="Mood K."/>
            <person name="Park M.J."/>
            <person name="Nishanian T.G."/>
            <person name="Lee H.S."/>
        </authorList>
    </citation>
    <scope>INTERACTION WITH TLE1</scope>
</reference>
<reference key="13">
    <citation type="journal article" date="2013" name="J. Proteome Res.">
        <title>Toward a comprehensive characterization of a human cancer cell phosphoproteome.</title>
        <authorList>
            <person name="Zhou H."/>
            <person name="Di Palma S."/>
            <person name="Preisinger C."/>
            <person name="Peng M."/>
            <person name="Polat A.N."/>
            <person name="Heck A.J."/>
            <person name="Mohammed S."/>
        </authorList>
    </citation>
    <scope>PHOSPHORYLATION [LARGE SCALE ANALYSIS] AT SER-281 AND SER-287</scope>
    <scope>IDENTIFICATION BY MASS SPECTROMETRY [LARGE SCALE ANALYSIS]</scope>
    <source>
        <tissue>Cervix carcinoma</tissue>
        <tissue>Erythroleukemia</tissue>
    </source>
</reference>
<reference key="14">
    <citation type="journal article" date="2014" name="J. Proteomics">
        <title>An enzyme assisted RP-RPLC approach for in-depth analysis of human liver phosphoproteome.</title>
        <authorList>
            <person name="Bian Y."/>
            <person name="Song C."/>
            <person name="Cheng K."/>
            <person name="Dong M."/>
            <person name="Wang F."/>
            <person name="Huang J."/>
            <person name="Sun D."/>
            <person name="Wang L."/>
            <person name="Ye M."/>
            <person name="Zou H."/>
        </authorList>
    </citation>
    <scope>IDENTIFICATION BY MASS SPECTROMETRY [LARGE SCALE ANALYSIS]</scope>
    <source>
        <tissue>Liver</tissue>
    </source>
</reference>
<reference key="15">
    <citation type="journal article" date="2004" name="Am. J. Hum. Genet.">
        <title>Mutations of the ephrin-B1 gene cause craniofrontonasal syndrome.</title>
        <authorList>
            <person name="Wieland I."/>
            <person name="Jakubiczka S."/>
            <person name="Muschke P."/>
            <person name="Cohen M."/>
            <person name="Thiele H."/>
            <person name="Gerlach K.L."/>
            <person name="Adams R.H."/>
            <person name="Wieacker P."/>
        </authorList>
    </citation>
    <scope>VARIANTS CFNS LEU-54 AND ILE-111</scope>
</reference>
<reference key="16">
    <citation type="journal article" date="2004" name="Proc. Natl. Acad. Sci. U.S.A.">
        <title>Mutations of ephrin-B1 (EFNB1), a marker of tissue boundary formation, cause craniofrontonasal syndrome.</title>
        <authorList>
            <person name="Twigg S.R.F."/>
            <person name="Kan R."/>
            <person name="Babbs C."/>
            <person name="Bochukova E.G."/>
            <person name="Robertson S.P."/>
            <person name="Wall S.A."/>
            <person name="Morriss-Kay G.M."/>
            <person name="Wilkie A.O.M."/>
        </authorList>
    </citation>
    <scope>VARIANTS CFNS THR-62; SER-98; PRO-115; HIS-119; THR-119; SER-151; VAL-151; PRO-155; ILE-158 AND VAL-158</scope>
    <scope>VARIANT HIS-154</scope>
</reference>
<reference key="17">
    <citation type="journal article" date="2005" name="Hum. Mutat.">
        <title>Twenty-six novel EFNB1 mutations in familial and sporadic craniofrontonasal syndrome (CFNS).</title>
        <authorList>
            <person name="Wieland I."/>
            <person name="Reardon W."/>
            <person name="Jakubiczka S."/>
            <person name="Franco B."/>
            <person name="Kress W."/>
            <person name="Vincent-Delorme C."/>
            <person name="Thierry P."/>
            <person name="Edwards M."/>
            <person name="Koenig R."/>
            <person name="Rusu C."/>
            <person name="Schweiger S."/>
            <person name="Thompson E."/>
            <person name="Tinschert S."/>
            <person name="Stewart F."/>
            <person name="Wieacker P."/>
        </authorList>
    </citation>
    <scope>VARIANTS CFNS ARG-27; LEU-54; SER-119; HIS-119; ALA-137; PHE-138; SER-151; SER-153; TYR-153 AND ARG-182</scope>
</reference>
<evidence type="ECO:0000250" key="1">
    <source>
        <dbReference type="UniProtKB" id="P52795"/>
    </source>
</evidence>
<evidence type="ECO:0000255" key="2"/>
<evidence type="ECO:0000255" key="3">
    <source>
        <dbReference type="PROSITE-ProRule" id="PRU00884"/>
    </source>
</evidence>
<evidence type="ECO:0000256" key="4">
    <source>
        <dbReference type="SAM" id="MobiDB-lite"/>
    </source>
</evidence>
<evidence type="ECO:0000269" key="5">
    <source>
    </source>
</evidence>
<evidence type="ECO:0000269" key="6">
    <source>
    </source>
</evidence>
<evidence type="ECO:0000269" key="7">
    <source>
    </source>
</evidence>
<evidence type="ECO:0000269" key="8">
    <source>
    </source>
</evidence>
<evidence type="ECO:0000269" key="9">
    <source>
    </source>
</evidence>
<evidence type="ECO:0000269" key="10">
    <source>
    </source>
</evidence>
<evidence type="ECO:0000269" key="11">
    <source>
    </source>
</evidence>
<evidence type="ECO:0000269" key="12">
    <source>
    </source>
</evidence>
<evidence type="ECO:0000269" key="13">
    <source>
    </source>
</evidence>
<evidence type="ECO:0000303" key="14">
    <source>
    </source>
</evidence>
<evidence type="ECO:0000305" key="15"/>
<evidence type="ECO:0007744" key="16">
    <source>
    </source>
</evidence>
<evidence type="ECO:0007744" key="17">
    <source>
    </source>
</evidence>
<evidence type="ECO:0007744" key="18">
    <source>
    </source>
</evidence>
<sequence>MARPGQRWLGKWLVAMVVWALCRLATPLAKNLEPVSWSSLNPKFLSGKGLVIYPKIGDKLDIICPRAEAGRPYEYYKLYLVRPEQAAACSTVLDPNVLVTCNRPEQEIRFTIKFQEFSPNYMGLEFKKHHDYYITSTSNGSLEGLENREGGVCRTRTMKIIMKVGQDPNAVTPEQLTTSRPSKEADNTVKMATQAPGSRGSLGDSDGKHETVNQEEKSGPGASGGSSGDPDGFFNSKVALFAAVGAGCVIFLLIIIFLTVLLLKLRKRHRKHTQQRAAALSLSTLASPKGGSGTAGTEPSDIIIPLRTTENNYCPHYEKVSGDYGHPVYIVQEMPPQSPANIYYKV</sequence>
<proteinExistence type="evidence at protein level"/>
<dbReference type="EMBL" id="U09304">
    <property type="protein sequence ID" value="AAA53093.1"/>
    <property type="molecule type" value="mRNA"/>
</dbReference>
<dbReference type="EMBL" id="L37361">
    <property type="protein sequence ID" value="AAA52369.1"/>
    <property type="molecule type" value="mRNA"/>
</dbReference>
<dbReference type="EMBL" id="U09303">
    <property type="protein sequence ID" value="AAB41127.1"/>
    <property type="molecule type" value="mRNA"/>
</dbReference>
<dbReference type="EMBL" id="AL136092">
    <property type="status" value="NOT_ANNOTATED_CDS"/>
    <property type="molecule type" value="Genomic_DNA"/>
</dbReference>
<dbReference type="EMBL" id="CH471132">
    <property type="protein sequence ID" value="EAX05370.1"/>
    <property type="molecule type" value="Genomic_DNA"/>
</dbReference>
<dbReference type="EMBL" id="CH471132">
    <property type="protein sequence ID" value="EAX05371.1"/>
    <property type="molecule type" value="Genomic_DNA"/>
</dbReference>
<dbReference type="EMBL" id="BC016649">
    <property type="protein sequence ID" value="AAH16649.1"/>
    <property type="molecule type" value="mRNA"/>
</dbReference>
<dbReference type="EMBL" id="BC052979">
    <property type="protein sequence ID" value="AAH52979.1"/>
    <property type="molecule type" value="mRNA"/>
</dbReference>
<dbReference type="CCDS" id="CCDS14391.1"/>
<dbReference type="PIR" id="S46993">
    <property type="entry name" value="S46993"/>
</dbReference>
<dbReference type="RefSeq" id="NP_004420.1">
    <property type="nucleotide sequence ID" value="NM_004429.5"/>
</dbReference>
<dbReference type="PDB" id="6THG">
    <property type="method" value="X-ray"/>
    <property type="resolution" value="4.07 A"/>
    <property type="chains" value="C/D/F/H/J=29-167"/>
</dbReference>
<dbReference type="PDBsum" id="6THG"/>
<dbReference type="SMR" id="P98172"/>
<dbReference type="BioGRID" id="108267">
    <property type="interactions" value="266"/>
</dbReference>
<dbReference type="CORUM" id="P98172"/>
<dbReference type="FunCoup" id="P98172">
    <property type="interactions" value="527"/>
</dbReference>
<dbReference type="IntAct" id="P98172">
    <property type="interactions" value="197"/>
</dbReference>
<dbReference type="MINT" id="P98172"/>
<dbReference type="STRING" id="9606.ENSP00000204961"/>
<dbReference type="GlyCosmos" id="P98172">
    <property type="glycosylation" value="1 site, No reported glycans"/>
</dbReference>
<dbReference type="GlyGen" id="P98172">
    <property type="glycosylation" value="11 sites, 7 N-linked glycans (1 site), 2 O-linked glycans (10 sites)"/>
</dbReference>
<dbReference type="iPTMnet" id="P98172"/>
<dbReference type="PhosphoSitePlus" id="P98172"/>
<dbReference type="BioMuta" id="EFNB1"/>
<dbReference type="DMDM" id="1706668"/>
<dbReference type="jPOST" id="P98172"/>
<dbReference type="MassIVE" id="P98172"/>
<dbReference type="PaxDb" id="9606-ENSP00000204961"/>
<dbReference type="PeptideAtlas" id="P98172"/>
<dbReference type="ProteomicsDB" id="57806"/>
<dbReference type="Pumba" id="P98172"/>
<dbReference type="Antibodypedia" id="43761">
    <property type="antibodies" value="583 antibodies from 36 providers"/>
</dbReference>
<dbReference type="DNASU" id="1947"/>
<dbReference type="Ensembl" id="ENST00000204961.5">
    <property type="protein sequence ID" value="ENSP00000204961.4"/>
    <property type="gene ID" value="ENSG00000090776.6"/>
</dbReference>
<dbReference type="GeneID" id="1947"/>
<dbReference type="KEGG" id="hsa:1947"/>
<dbReference type="MANE-Select" id="ENST00000204961.5">
    <property type="protein sequence ID" value="ENSP00000204961.4"/>
    <property type="RefSeq nucleotide sequence ID" value="NM_004429.5"/>
    <property type="RefSeq protein sequence ID" value="NP_004420.1"/>
</dbReference>
<dbReference type="UCSC" id="uc004dxd.5">
    <property type="organism name" value="human"/>
</dbReference>
<dbReference type="AGR" id="HGNC:3226"/>
<dbReference type="CTD" id="1947"/>
<dbReference type="DisGeNET" id="1947"/>
<dbReference type="GeneCards" id="EFNB1"/>
<dbReference type="HGNC" id="HGNC:3226">
    <property type="gene designation" value="EFNB1"/>
</dbReference>
<dbReference type="HPA" id="ENSG00000090776">
    <property type="expression patterns" value="Low tissue specificity"/>
</dbReference>
<dbReference type="MalaCards" id="EFNB1"/>
<dbReference type="MIM" id="300035">
    <property type="type" value="gene"/>
</dbReference>
<dbReference type="MIM" id="304110">
    <property type="type" value="phenotype"/>
</dbReference>
<dbReference type="neXtProt" id="NX_P98172"/>
<dbReference type="OpenTargets" id="ENSG00000090776"/>
<dbReference type="Orphanet" id="1520">
    <property type="disease" value="Craniofrontonasal dysplasia"/>
</dbReference>
<dbReference type="PharmGKB" id="PA27661"/>
<dbReference type="VEuPathDB" id="HostDB:ENSG00000090776"/>
<dbReference type="eggNOG" id="KOG3858">
    <property type="taxonomic scope" value="Eukaryota"/>
</dbReference>
<dbReference type="GeneTree" id="ENSGT00940000160128"/>
<dbReference type="HOGENOM" id="CLU_072080_0_0_1"/>
<dbReference type="InParanoid" id="P98172"/>
<dbReference type="OMA" id="QAEFCST"/>
<dbReference type="OrthoDB" id="6250301at2759"/>
<dbReference type="PAN-GO" id="P98172">
    <property type="GO annotations" value="4 GO annotations based on evolutionary models"/>
</dbReference>
<dbReference type="PhylomeDB" id="P98172"/>
<dbReference type="PathwayCommons" id="P98172"/>
<dbReference type="Reactome" id="R-HSA-2682334">
    <property type="pathway name" value="EPH-Ephrin signaling"/>
</dbReference>
<dbReference type="Reactome" id="R-HSA-3928662">
    <property type="pathway name" value="EPHB-mediated forward signaling"/>
</dbReference>
<dbReference type="Reactome" id="R-HSA-3928664">
    <property type="pathway name" value="Ephrin signaling"/>
</dbReference>
<dbReference type="Reactome" id="R-HSA-3928665">
    <property type="pathway name" value="EPH-ephrin mediated repulsion of cells"/>
</dbReference>
<dbReference type="SignaLink" id="P98172"/>
<dbReference type="SIGNOR" id="P98172"/>
<dbReference type="BioGRID-ORCS" id="1947">
    <property type="hits" value="13 hits in 786 CRISPR screens"/>
</dbReference>
<dbReference type="ChiTaRS" id="EFNB1">
    <property type="organism name" value="human"/>
</dbReference>
<dbReference type="GeneWiki" id="EFNB1"/>
<dbReference type="GenomeRNAi" id="1947"/>
<dbReference type="Pharos" id="P98172">
    <property type="development level" value="Tbio"/>
</dbReference>
<dbReference type="PRO" id="PR:P98172"/>
<dbReference type="Proteomes" id="UP000005640">
    <property type="component" value="Chromosome X"/>
</dbReference>
<dbReference type="RNAct" id="P98172">
    <property type="molecule type" value="protein"/>
</dbReference>
<dbReference type="Bgee" id="ENSG00000090776">
    <property type="expression patterns" value="Expressed in ventricular zone and 126 other cell types or tissues"/>
</dbReference>
<dbReference type="GO" id="GO:0009986">
    <property type="term" value="C:cell surface"/>
    <property type="evidence" value="ECO:0000314"/>
    <property type="project" value="UniProt"/>
</dbReference>
<dbReference type="GO" id="GO:0005737">
    <property type="term" value="C:cytoplasm"/>
    <property type="evidence" value="ECO:0007669"/>
    <property type="project" value="Ensembl"/>
</dbReference>
<dbReference type="GO" id="GO:0070062">
    <property type="term" value="C:extracellular exosome"/>
    <property type="evidence" value="ECO:0007005"/>
    <property type="project" value="UniProtKB"/>
</dbReference>
<dbReference type="GO" id="GO:0098978">
    <property type="term" value="C:glutamatergic synapse"/>
    <property type="evidence" value="ECO:0000318"/>
    <property type="project" value="GO_Central"/>
</dbReference>
<dbReference type="GO" id="GO:0045121">
    <property type="term" value="C:membrane raft"/>
    <property type="evidence" value="ECO:0007669"/>
    <property type="project" value="UniProtKB-SubCell"/>
</dbReference>
<dbReference type="GO" id="GO:0005634">
    <property type="term" value="C:nucleus"/>
    <property type="evidence" value="ECO:0007669"/>
    <property type="project" value="UniProtKB-SubCell"/>
</dbReference>
<dbReference type="GO" id="GO:0005886">
    <property type="term" value="C:plasma membrane"/>
    <property type="evidence" value="ECO:0000314"/>
    <property type="project" value="HPA"/>
</dbReference>
<dbReference type="GO" id="GO:0042734">
    <property type="term" value="C:presynaptic membrane"/>
    <property type="evidence" value="ECO:0000318"/>
    <property type="project" value="GO_Central"/>
</dbReference>
<dbReference type="GO" id="GO:0045202">
    <property type="term" value="C:synapse"/>
    <property type="evidence" value="ECO:0000250"/>
    <property type="project" value="UniProtKB"/>
</dbReference>
<dbReference type="GO" id="GO:0046875">
    <property type="term" value="F:ephrin receptor binding"/>
    <property type="evidence" value="ECO:0000314"/>
    <property type="project" value="UniProt"/>
</dbReference>
<dbReference type="GO" id="GO:0007411">
    <property type="term" value="P:axon guidance"/>
    <property type="evidence" value="ECO:0000318"/>
    <property type="project" value="GO_Central"/>
</dbReference>
<dbReference type="GO" id="GO:0007155">
    <property type="term" value="P:cell adhesion"/>
    <property type="evidence" value="ECO:0000304"/>
    <property type="project" value="ProtInc"/>
</dbReference>
<dbReference type="GO" id="GO:0007267">
    <property type="term" value="P:cell-cell signaling"/>
    <property type="evidence" value="ECO:0000304"/>
    <property type="project" value="ProtInc"/>
</dbReference>
<dbReference type="GO" id="GO:0009880">
    <property type="term" value="P:embryonic pattern specification"/>
    <property type="evidence" value="ECO:0007669"/>
    <property type="project" value="Ensembl"/>
</dbReference>
<dbReference type="GO" id="GO:0048013">
    <property type="term" value="P:ephrin receptor signaling pathway"/>
    <property type="evidence" value="ECO:0000318"/>
    <property type="project" value="GO_Central"/>
</dbReference>
<dbReference type="GO" id="GO:0001755">
    <property type="term" value="P:neural crest cell migration"/>
    <property type="evidence" value="ECO:0007669"/>
    <property type="project" value="Ensembl"/>
</dbReference>
<dbReference type="GO" id="GO:0042102">
    <property type="term" value="P:positive regulation of T cell proliferation"/>
    <property type="evidence" value="ECO:0007669"/>
    <property type="project" value="Ensembl"/>
</dbReference>
<dbReference type="GO" id="GO:2000785">
    <property type="term" value="P:regulation of autophagosome assembly"/>
    <property type="evidence" value="ECO:0000314"/>
    <property type="project" value="UniProt"/>
</dbReference>
<dbReference type="GO" id="GO:0031295">
    <property type="term" value="P:T cell costimulation"/>
    <property type="evidence" value="ECO:0007669"/>
    <property type="project" value="Ensembl"/>
</dbReference>
<dbReference type="GO" id="GO:0042098">
    <property type="term" value="P:T cell proliferation"/>
    <property type="evidence" value="ECO:0007669"/>
    <property type="project" value="Ensembl"/>
</dbReference>
<dbReference type="CDD" id="cd10426">
    <property type="entry name" value="Ephrin-B_Ectodomain"/>
    <property type="match status" value="1"/>
</dbReference>
<dbReference type="FunFam" id="2.60.40.420:FF:000027">
    <property type="entry name" value="ephrin-B1"/>
    <property type="match status" value="1"/>
</dbReference>
<dbReference type="Gene3D" id="2.60.40.420">
    <property type="entry name" value="Cupredoxins - blue copper proteins"/>
    <property type="match status" value="1"/>
</dbReference>
<dbReference type="InterPro" id="IPR008972">
    <property type="entry name" value="Cupredoxin"/>
</dbReference>
<dbReference type="InterPro" id="IPR031328">
    <property type="entry name" value="Ephrin"/>
</dbReference>
<dbReference type="InterPro" id="IPR034255">
    <property type="entry name" value="Ephrin-B_Ecto"/>
</dbReference>
<dbReference type="InterPro" id="IPR019765">
    <property type="entry name" value="Ephrin_CS"/>
</dbReference>
<dbReference type="InterPro" id="IPR001799">
    <property type="entry name" value="Ephrin_RBD"/>
</dbReference>
<dbReference type="PANTHER" id="PTHR11304">
    <property type="entry name" value="EPHRIN"/>
    <property type="match status" value="1"/>
</dbReference>
<dbReference type="PANTHER" id="PTHR11304:SF17">
    <property type="entry name" value="EPHRIN-B1"/>
    <property type="match status" value="1"/>
</dbReference>
<dbReference type="Pfam" id="PF00812">
    <property type="entry name" value="Ephrin"/>
    <property type="match status" value="1"/>
</dbReference>
<dbReference type="PRINTS" id="PR01347">
    <property type="entry name" value="EPHRIN"/>
</dbReference>
<dbReference type="SUPFAM" id="SSF49503">
    <property type="entry name" value="Cupredoxins"/>
    <property type="match status" value="1"/>
</dbReference>
<dbReference type="PROSITE" id="PS01299">
    <property type="entry name" value="EPHRIN_RBD_1"/>
    <property type="match status" value="1"/>
</dbReference>
<dbReference type="PROSITE" id="PS51551">
    <property type="entry name" value="EPHRIN_RBD_2"/>
    <property type="match status" value="1"/>
</dbReference>